<comment type="function">
    <text evidence="1">Fluoride-specific ion channel. Important for reducing fluoride concentration in the cell, thus reducing its toxicity.</text>
</comment>
<comment type="catalytic activity">
    <reaction evidence="1">
        <text>fluoride(in) = fluoride(out)</text>
        <dbReference type="Rhea" id="RHEA:76159"/>
        <dbReference type="ChEBI" id="CHEBI:17051"/>
    </reaction>
    <physiologicalReaction direction="left-to-right" evidence="1">
        <dbReference type="Rhea" id="RHEA:76160"/>
    </physiologicalReaction>
</comment>
<comment type="activity regulation">
    <text evidence="1">Na(+) is not transported, but it plays an essential structural role and its presence is essential for fluoride channel function.</text>
</comment>
<comment type="subcellular location">
    <subcellularLocation>
        <location evidence="1">Cell inner membrane</location>
        <topology evidence="1">Multi-pass membrane protein</topology>
    </subcellularLocation>
</comment>
<comment type="similarity">
    <text evidence="1">Belongs to the fluoride channel Fluc/FEX (TC 1.A.43) family.</text>
</comment>
<gene>
    <name evidence="1" type="primary">fluC</name>
    <name evidence="1" type="synonym">crcB</name>
    <name type="ordered locus">NMCC_0983</name>
</gene>
<accession>A9LYY6</accession>
<proteinExistence type="inferred from homology"/>
<evidence type="ECO:0000255" key="1">
    <source>
        <dbReference type="HAMAP-Rule" id="MF_00454"/>
    </source>
</evidence>
<organism>
    <name type="scientific">Neisseria meningitidis serogroup C (strain 053442)</name>
    <dbReference type="NCBI Taxonomy" id="374833"/>
    <lineage>
        <taxon>Bacteria</taxon>
        <taxon>Pseudomonadati</taxon>
        <taxon>Pseudomonadota</taxon>
        <taxon>Betaproteobacteria</taxon>
        <taxon>Neisseriales</taxon>
        <taxon>Neisseriaceae</taxon>
        <taxon>Neisseria</taxon>
    </lineage>
</organism>
<dbReference type="EMBL" id="CP000381">
    <property type="protein sequence ID" value="ABX73163.1"/>
    <property type="molecule type" value="Genomic_DNA"/>
</dbReference>
<dbReference type="RefSeq" id="WP_012221600.1">
    <property type="nucleotide sequence ID" value="NC_010120.1"/>
</dbReference>
<dbReference type="SMR" id="A9LYY6"/>
<dbReference type="KEGG" id="nmn:NMCC_0983"/>
<dbReference type="HOGENOM" id="CLU_114342_3_0_4"/>
<dbReference type="Proteomes" id="UP000001177">
    <property type="component" value="Chromosome"/>
</dbReference>
<dbReference type="GO" id="GO:0005886">
    <property type="term" value="C:plasma membrane"/>
    <property type="evidence" value="ECO:0007669"/>
    <property type="project" value="UniProtKB-SubCell"/>
</dbReference>
<dbReference type="GO" id="GO:0062054">
    <property type="term" value="F:fluoride channel activity"/>
    <property type="evidence" value="ECO:0007669"/>
    <property type="project" value="UniProtKB-UniRule"/>
</dbReference>
<dbReference type="GO" id="GO:0046872">
    <property type="term" value="F:metal ion binding"/>
    <property type="evidence" value="ECO:0007669"/>
    <property type="project" value="UniProtKB-KW"/>
</dbReference>
<dbReference type="GO" id="GO:0140114">
    <property type="term" value="P:cellular detoxification of fluoride"/>
    <property type="evidence" value="ECO:0007669"/>
    <property type="project" value="UniProtKB-UniRule"/>
</dbReference>
<dbReference type="HAMAP" id="MF_00454">
    <property type="entry name" value="FluC"/>
    <property type="match status" value="1"/>
</dbReference>
<dbReference type="InterPro" id="IPR003691">
    <property type="entry name" value="FluC"/>
</dbReference>
<dbReference type="NCBIfam" id="NF010826">
    <property type="entry name" value="PRK14230.1"/>
    <property type="match status" value="1"/>
</dbReference>
<dbReference type="PANTHER" id="PTHR28259">
    <property type="entry name" value="FLUORIDE EXPORT PROTEIN 1-RELATED"/>
    <property type="match status" value="1"/>
</dbReference>
<dbReference type="PANTHER" id="PTHR28259:SF1">
    <property type="entry name" value="FLUORIDE EXPORT PROTEIN 1-RELATED"/>
    <property type="match status" value="1"/>
</dbReference>
<dbReference type="Pfam" id="PF02537">
    <property type="entry name" value="CRCB"/>
    <property type="match status" value="1"/>
</dbReference>
<keyword id="KW-0997">Cell inner membrane</keyword>
<keyword id="KW-1003">Cell membrane</keyword>
<keyword id="KW-0407">Ion channel</keyword>
<keyword id="KW-0406">Ion transport</keyword>
<keyword id="KW-0472">Membrane</keyword>
<keyword id="KW-0479">Metal-binding</keyword>
<keyword id="KW-0915">Sodium</keyword>
<keyword id="KW-0812">Transmembrane</keyword>
<keyword id="KW-1133">Transmembrane helix</keyword>
<keyword id="KW-0813">Transport</keyword>
<protein>
    <recommendedName>
        <fullName evidence="1">Fluoride-specific ion channel FluC</fullName>
    </recommendedName>
</protein>
<sequence length="119" mass="12440">MLSNIIPLSIGAALGATARWLLNLAVPAAMSPATGNLFANWTGALLIGIFAETVNHPQWKLLLITGFLGSLTTLSGFSLETVTLLQSNRPASALSNIFLHTAGSLLLTWLGLKIGTAVK</sequence>
<reference key="1">
    <citation type="journal article" date="2008" name="Genomics">
        <title>Characterization of ST-4821 complex, a unique Neisseria meningitidis clone.</title>
        <authorList>
            <person name="Peng J."/>
            <person name="Yang L."/>
            <person name="Yang F."/>
            <person name="Yang J."/>
            <person name="Yan Y."/>
            <person name="Nie H."/>
            <person name="Zhang X."/>
            <person name="Xiong Z."/>
            <person name="Jiang Y."/>
            <person name="Cheng F."/>
            <person name="Xu X."/>
            <person name="Chen S."/>
            <person name="Sun L."/>
            <person name="Li W."/>
            <person name="Shen Y."/>
            <person name="Shao Z."/>
            <person name="Liang X."/>
            <person name="Xu J."/>
            <person name="Jin Q."/>
        </authorList>
    </citation>
    <scope>NUCLEOTIDE SEQUENCE [LARGE SCALE GENOMIC DNA]</scope>
    <source>
        <strain>053442</strain>
    </source>
</reference>
<name>FLUC_NEIM0</name>
<feature type="chain" id="PRO_1000081014" description="Fluoride-specific ion channel FluC">
    <location>
        <begin position="1"/>
        <end position="119"/>
    </location>
</feature>
<feature type="transmembrane region" description="Helical" evidence="1">
    <location>
        <begin position="37"/>
        <end position="54"/>
    </location>
</feature>
<feature type="transmembrane region" description="Helical" evidence="1">
    <location>
        <begin position="61"/>
        <end position="83"/>
    </location>
</feature>
<feature type="transmembrane region" description="Helical" evidence="1">
    <location>
        <begin position="93"/>
        <end position="112"/>
    </location>
</feature>
<feature type="binding site" evidence="1">
    <location>
        <position position="69"/>
    </location>
    <ligand>
        <name>Na(+)</name>
        <dbReference type="ChEBI" id="CHEBI:29101"/>
        <note>structural</note>
    </ligand>
</feature>
<feature type="binding site" evidence="1">
    <location>
        <position position="72"/>
    </location>
    <ligand>
        <name>Na(+)</name>
        <dbReference type="ChEBI" id="CHEBI:29101"/>
        <note>structural</note>
    </ligand>
</feature>